<feature type="chain" id="PRO_0000195328" description="Glucose-1-phosphate adenylyltransferase">
    <location>
        <begin position="1"/>
        <end position="420"/>
    </location>
</feature>
<feature type="binding site" evidence="1">
    <location>
        <position position="107"/>
    </location>
    <ligand>
        <name>alpha-D-glucose 1-phosphate</name>
        <dbReference type="ChEBI" id="CHEBI:58601"/>
    </ligand>
</feature>
<feature type="binding site" evidence="1">
    <location>
        <position position="173"/>
    </location>
    <ligand>
        <name>alpha-D-glucose 1-phosphate</name>
        <dbReference type="ChEBI" id="CHEBI:58601"/>
    </ligand>
</feature>
<feature type="binding site" evidence="1">
    <location>
        <begin position="188"/>
        <end position="189"/>
    </location>
    <ligand>
        <name>alpha-D-glucose 1-phosphate</name>
        <dbReference type="ChEBI" id="CHEBI:58601"/>
    </ligand>
</feature>
<feature type="binding site" evidence="1">
    <location>
        <position position="206"/>
    </location>
    <ligand>
        <name>alpha-D-glucose 1-phosphate</name>
        <dbReference type="ChEBI" id="CHEBI:58601"/>
    </ligand>
</feature>
<name>GLGC_SHEON</name>
<accession>Q8EGU3</accession>
<reference key="1">
    <citation type="journal article" date="2002" name="Nat. Biotechnol.">
        <title>Genome sequence of the dissimilatory metal ion-reducing bacterium Shewanella oneidensis.</title>
        <authorList>
            <person name="Heidelberg J.F."/>
            <person name="Paulsen I.T."/>
            <person name="Nelson K.E."/>
            <person name="Gaidos E.J."/>
            <person name="Nelson W.C."/>
            <person name="Read T.D."/>
            <person name="Eisen J.A."/>
            <person name="Seshadri R."/>
            <person name="Ward N.L."/>
            <person name="Methe B.A."/>
            <person name="Clayton R.A."/>
            <person name="Meyer T."/>
            <person name="Tsapin A."/>
            <person name="Scott J."/>
            <person name="Beanan M.J."/>
            <person name="Brinkac L.M."/>
            <person name="Daugherty S.C."/>
            <person name="DeBoy R.T."/>
            <person name="Dodson R.J."/>
            <person name="Durkin A.S."/>
            <person name="Haft D.H."/>
            <person name="Kolonay J.F."/>
            <person name="Madupu R."/>
            <person name="Peterson J.D."/>
            <person name="Umayam L.A."/>
            <person name="White O."/>
            <person name="Wolf A.M."/>
            <person name="Vamathevan J.J."/>
            <person name="Weidman J.F."/>
            <person name="Impraim M."/>
            <person name="Lee K."/>
            <person name="Berry K.J."/>
            <person name="Lee C."/>
            <person name="Mueller J."/>
            <person name="Khouri H.M."/>
            <person name="Gill J."/>
            <person name="Utterback T.R."/>
            <person name="McDonald L.A."/>
            <person name="Feldblyum T.V."/>
            <person name="Smith H.O."/>
            <person name="Venter J.C."/>
            <person name="Nealson K.H."/>
            <person name="Fraser C.M."/>
        </authorList>
    </citation>
    <scope>NUCLEOTIDE SEQUENCE [LARGE SCALE GENOMIC DNA]</scope>
    <source>
        <strain>ATCC 700550 / JCM 31522 / CIP 106686 / LMG 19005 / NCIMB 14063 / MR-1</strain>
    </source>
</reference>
<keyword id="KW-0067">ATP-binding</keyword>
<keyword id="KW-0119">Carbohydrate metabolism</keyword>
<keyword id="KW-0320">Glycogen biosynthesis</keyword>
<keyword id="KW-0321">Glycogen metabolism</keyword>
<keyword id="KW-0547">Nucleotide-binding</keyword>
<keyword id="KW-0548">Nucleotidyltransferase</keyword>
<keyword id="KW-1185">Reference proteome</keyword>
<keyword id="KW-0808">Transferase</keyword>
<evidence type="ECO:0000255" key="1">
    <source>
        <dbReference type="HAMAP-Rule" id="MF_00624"/>
    </source>
</evidence>
<sequence>MSNVRYISNLTRETYALILAGGRGSRLHELTDWRAKPALYFGGKFRIIDFPLSNCINSGIRRVGVVTQYKSHSLIRHVMRGWGHFKKELGESVEILPASQRYSENWYQGTADAVFQNIDIIRHELPKYVMVLSGDHVYRMDYAGLLAAHAESGADMTVSCLEVPVAEAAGAFGVMEVDDDMRILGFEEKPQLPKHCPGNPEKCLASMGNYVFNTEFLFEQLKKDAQNAESDRDFGKDIIPSIIEKHKVFAYPFKSAFPNEQAYWRDVGTLDSFWLANMELLSPTPALNLYDAKWPIWTYQEQLPPAKFVFDDDDRRGMAVDSIISGGCIISGATVRRSVLFNEVRVCSYSVVEDSVVLPDVVVLRHCKIKNAIIDRGCIIPEGTVIGYNHDHDRAKGFRVSEKGITLVTRDMLGLPVGYE</sequence>
<comment type="function">
    <text evidence="1">Involved in the biosynthesis of ADP-glucose, a building block required for the elongation reactions to produce glycogen. Catalyzes the reaction between ATP and alpha-D-glucose 1-phosphate (G1P) to produce pyrophosphate and ADP-Glc.</text>
</comment>
<comment type="catalytic activity">
    <reaction evidence="1">
        <text>alpha-D-glucose 1-phosphate + ATP + H(+) = ADP-alpha-D-glucose + diphosphate</text>
        <dbReference type="Rhea" id="RHEA:12120"/>
        <dbReference type="ChEBI" id="CHEBI:15378"/>
        <dbReference type="ChEBI" id="CHEBI:30616"/>
        <dbReference type="ChEBI" id="CHEBI:33019"/>
        <dbReference type="ChEBI" id="CHEBI:57498"/>
        <dbReference type="ChEBI" id="CHEBI:58601"/>
        <dbReference type="EC" id="2.7.7.27"/>
    </reaction>
</comment>
<comment type="pathway">
    <text evidence="1">Glycan biosynthesis; glycogen biosynthesis.</text>
</comment>
<comment type="subunit">
    <text evidence="1">Homotetramer.</text>
</comment>
<comment type="similarity">
    <text evidence="1">Belongs to the bacterial/plant glucose-1-phosphate adenylyltransferase family.</text>
</comment>
<proteinExistence type="inferred from homology"/>
<dbReference type="EC" id="2.7.7.27" evidence="1"/>
<dbReference type="EMBL" id="AE014299">
    <property type="protein sequence ID" value="AAN54559.1"/>
    <property type="molecule type" value="Genomic_DNA"/>
</dbReference>
<dbReference type="RefSeq" id="NP_717115.1">
    <property type="nucleotide sequence ID" value="NC_004347.2"/>
</dbReference>
<dbReference type="RefSeq" id="WP_011071681.1">
    <property type="nucleotide sequence ID" value="NC_004347.2"/>
</dbReference>
<dbReference type="SMR" id="Q8EGU3"/>
<dbReference type="STRING" id="211586.SO_1498"/>
<dbReference type="PaxDb" id="211586-SO_1498"/>
<dbReference type="KEGG" id="son:SO_1498"/>
<dbReference type="PATRIC" id="fig|211586.12.peg.1441"/>
<dbReference type="eggNOG" id="COG0448">
    <property type="taxonomic scope" value="Bacteria"/>
</dbReference>
<dbReference type="HOGENOM" id="CLU_029499_14_1_6"/>
<dbReference type="OrthoDB" id="9801810at2"/>
<dbReference type="PhylomeDB" id="Q8EGU3"/>
<dbReference type="BioCyc" id="SONE211586:G1GMP-1383-MONOMER"/>
<dbReference type="UniPathway" id="UPA00164"/>
<dbReference type="Proteomes" id="UP000008186">
    <property type="component" value="Chromosome"/>
</dbReference>
<dbReference type="GO" id="GO:0005524">
    <property type="term" value="F:ATP binding"/>
    <property type="evidence" value="ECO:0007669"/>
    <property type="project" value="UniProtKB-KW"/>
</dbReference>
<dbReference type="GO" id="GO:0008878">
    <property type="term" value="F:glucose-1-phosphate adenylyltransferase activity"/>
    <property type="evidence" value="ECO:0007669"/>
    <property type="project" value="UniProtKB-UniRule"/>
</dbReference>
<dbReference type="GO" id="GO:0005978">
    <property type="term" value="P:glycogen biosynthetic process"/>
    <property type="evidence" value="ECO:0007669"/>
    <property type="project" value="UniProtKB-UniRule"/>
</dbReference>
<dbReference type="CDD" id="cd02508">
    <property type="entry name" value="ADP_Glucose_PP"/>
    <property type="match status" value="1"/>
</dbReference>
<dbReference type="CDD" id="cd04651">
    <property type="entry name" value="LbH_G1P_AT_C"/>
    <property type="match status" value="1"/>
</dbReference>
<dbReference type="Gene3D" id="2.160.10.10">
    <property type="entry name" value="Hexapeptide repeat proteins"/>
    <property type="match status" value="1"/>
</dbReference>
<dbReference type="Gene3D" id="3.90.550.10">
    <property type="entry name" value="Spore Coat Polysaccharide Biosynthesis Protein SpsA, Chain A"/>
    <property type="match status" value="1"/>
</dbReference>
<dbReference type="HAMAP" id="MF_00624">
    <property type="entry name" value="GlgC"/>
    <property type="match status" value="1"/>
</dbReference>
<dbReference type="InterPro" id="IPR011831">
    <property type="entry name" value="ADP-Glc_PPase"/>
</dbReference>
<dbReference type="InterPro" id="IPR005836">
    <property type="entry name" value="ADP_Glu_pyroP_CS"/>
</dbReference>
<dbReference type="InterPro" id="IPR023049">
    <property type="entry name" value="GlgC_bac"/>
</dbReference>
<dbReference type="InterPro" id="IPR056818">
    <property type="entry name" value="GlmU/GlgC-like_hexapep"/>
</dbReference>
<dbReference type="InterPro" id="IPR005835">
    <property type="entry name" value="NTP_transferase_dom"/>
</dbReference>
<dbReference type="InterPro" id="IPR029044">
    <property type="entry name" value="Nucleotide-diphossugar_trans"/>
</dbReference>
<dbReference type="InterPro" id="IPR011004">
    <property type="entry name" value="Trimer_LpxA-like_sf"/>
</dbReference>
<dbReference type="NCBIfam" id="TIGR02091">
    <property type="entry name" value="glgC"/>
    <property type="match status" value="1"/>
</dbReference>
<dbReference type="NCBIfam" id="NF001947">
    <property type="entry name" value="PRK00725.1"/>
    <property type="match status" value="1"/>
</dbReference>
<dbReference type="NCBIfam" id="NF002023">
    <property type="entry name" value="PRK00844.1"/>
    <property type="match status" value="1"/>
</dbReference>
<dbReference type="PANTHER" id="PTHR43523:SF2">
    <property type="entry name" value="GLUCOSE-1-PHOSPHATE ADENYLYLTRANSFERASE"/>
    <property type="match status" value="1"/>
</dbReference>
<dbReference type="PANTHER" id="PTHR43523">
    <property type="entry name" value="GLUCOSE-1-PHOSPHATE ADENYLYLTRANSFERASE-RELATED"/>
    <property type="match status" value="1"/>
</dbReference>
<dbReference type="Pfam" id="PF24894">
    <property type="entry name" value="Hexapep_GlmU"/>
    <property type="match status" value="1"/>
</dbReference>
<dbReference type="Pfam" id="PF00483">
    <property type="entry name" value="NTP_transferase"/>
    <property type="match status" value="1"/>
</dbReference>
<dbReference type="SUPFAM" id="SSF53448">
    <property type="entry name" value="Nucleotide-diphospho-sugar transferases"/>
    <property type="match status" value="1"/>
</dbReference>
<dbReference type="SUPFAM" id="SSF51161">
    <property type="entry name" value="Trimeric LpxA-like enzymes"/>
    <property type="match status" value="1"/>
</dbReference>
<dbReference type="PROSITE" id="PS00808">
    <property type="entry name" value="ADP_GLC_PYROPHOSPH_1"/>
    <property type="match status" value="1"/>
</dbReference>
<dbReference type="PROSITE" id="PS00809">
    <property type="entry name" value="ADP_GLC_PYROPHOSPH_2"/>
    <property type="match status" value="1"/>
</dbReference>
<dbReference type="PROSITE" id="PS00810">
    <property type="entry name" value="ADP_GLC_PYROPHOSPH_3"/>
    <property type="match status" value="1"/>
</dbReference>
<gene>
    <name evidence="1" type="primary">glgC</name>
    <name type="ordered locus">SO_1498</name>
</gene>
<organism>
    <name type="scientific">Shewanella oneidensis (strain ATCC 700550 / JCM 31522 / CIP 106686 / LMG 19005 / NCIMB 14063 / MR-1)</name>
    <dbReference type="NCBI Taxonomy" id="211586"/>
    <lineage>
        <taxon>Bacteria</taxon>
        <taxon>Pseudomonadati</taxon>
        <taxon>Pseudomonadota</taxon>
        <taxon>Gammaproteobacteria</taxon>
        <taxon>Alteromonadales</taxon>
        <taxon>Shewanellaceae</taxon>
        <taxon>Shewanella</taxon>
    </lineage>
</organism>
<protein>
    <recommendedName>
        <fullName evidence="1">Glucose-1-phosphate adenylyltransferase</fullName>
        <ecNumber evidence="1">2.7.7.27</ecNumber>
    </recommendedName>
    <alternativeName>
        <fullName evidence="1">ADP-glucose pyrophosphorylase</fullName>
        <shortName evidence="1">ADPGlc PPase</shortName>
    </alternativeName>
    <alternativeName>
        <fullName evidence="1">ADP-glucose synthase</fullName>
    </alternativeName>
</protein>